<dbReference type="EC" id="3.2.1.196" evidence="1"/>
<dbReference type="EMBL" id="CU928158">
    <property type="protein sequence ID" value="CAQ90885.1"/>
    <property type="molecule type" value="Genomic_DNA"/>
</dbReference>
<dbReference type="SMR" id="B7LSE2"/>
<dbReference type="CAZy" id="CBM48">
    <property type="family name" value="Carbohydrate-Binding Module Family 48"/>
</dbReference>
<dbReference type="CAZy" id="GH13">
    <property type="family name" value="Glycoside Hydrolase Family 13"/>
</dbReference>
<dbReference type="KEGG" id="efe:EFER_3408"/>
<dbReference type="HOGENOM" id="CLU_011725_1_1_6"/>
<dbReference type="OrthoDB" id="3236218at2"/>
<dbReference type="UniPathway" id="UPA00165"/>
<dbReference type="Proteomes" id="UP000000745">
    <property type="component" value="Chromosome"/>
</dbReference>
<dbReference type="GO" id="GO:0004133">
    <property type="term" value="F:glycogen debranching enzyme activity"/>
    <property type="evidence" value="ECO:0007669"/>
    <property type="project" value="UniProtKB-UniRule"/>
</dbReference>
<dbReference type="GO" id="GO:0004553">
    <property type="term" value="F:hydrolase activity, hydrolyzing O-glycosyl compounds"/>
    <property type="evidence" value="ECO:0007669"/>
    <property type="project" value="InterPro"/>
</dbReference>
<dbReference type="GO" id="GO:0005980">
    <property type="term" value="P:glycogen catabolic process"/>
    <property type="evidence" value="ECO:0007669"/>
    <property type="project" value="UniProtKB-UniRule"/>
</dbReference>
<dbReference type="CDD" id="cd11326">
    <property type="entry name" value="AmyAc_Glg_debranch"/>
    <property type="match status" value="1"/>
</dbReference>
<dbReference type="CDD" id="cd02856">
    <property type="entry name" value="E_set_GDE_Isoamylase_N"/>
    <property type="match status" value="1"/>
</dbReference>
<dbReference type="FunFam" id="2.60.40.10:FF:000468">
    <property type="entry name" value="Glycogen debranching enzyme"/>
    <property type="match status" value="1"/>
</dbReference>
<dbReference type="Gene3D" id="3.20.20.80">
    <property type="entry name" value="Glycosidases"/>
    <property type="match status" value="1"/>
</dbReference>
<dbReference type="Gene3D" id="2.60.40.1180">
    <property type="entry name" value="Golgi alpha-mannosidase II"/>
    <property type="match status" value="1"/>
</dbReference>
<dbReference type="Gene3D" id="2.60.40.10">
    <property type="entry name" value="Immunoglobulins"/>
    <property type="match status" value="1"/>
</dbReference>
<dbReference type="HAMAP" id="MF_01248">
    <property type="entry name" value="GlgX"/>
    <property type="match status" value="1"/>
</dbReference>
<dbReference type="InterPro" id="IPR040784">
    <property type="entry name" value="GlgX_C"/>
</dbReference>
<dbReference type="InterPro" id="IPR044505">
    <property type="entry name" value="GlgX_Isoamylase_N_E_set"/>
</dbReference>
<dbReference type="InterPro" id="IPR006047">
    <property type="entry name" value="Glyco_hydro_13_cat_dom"/>
</dbReference>
<dbReference type="InterPro" id="IPR004193">
    <property type="entry name" value="Glyco_hydro_13_N"/>
</dbReference>
<dbReference type="InterPro" id="IPR013780">
    <property type="entry name" value="Glyco_hydro_b"/>
</dbReference>
<dbReference type="InterPro" id="IPR022844">
    <property type="entry name" value="Glycogen_debranch_bac"/>
</dbReference>
<dbReference type="InterPro" id="IPR011837">
    <property type="entry name" value="Glycogen_debranch_GlgX"/>
</dbReference>
<dbReference type="InterPro" id="IPR017853">
    <property type="entry name" value="Glycoside_hydrolase_SF"/>
</dbReference>
<dbReference type="InterPro" id="IPR013783">
    <property type="entry name" value="Ig-like_fold"/>
</dbReference>
<dbReference type="InterPro" id="IPR014756">
    <property type="entry name" value="Ig_E-set"/>
</dbReference>
<dbReference type="NCBIfam" id="TIGR02100">
    <property type="entry name" value="glgX_debranch"/>
    <property type="match status" value="1"/>
</dbReference>
<dbReference type="NCBIfam" id="NF002983">
    <property type="entry name" value="PRK03705.1"/>
    <property type="match status" value="1"/>
</dbReference>
<dbReference type="PANTHER" id="PTHR43002">
    <property type="entry name" value="GLYCOGEN DEBRANCHING ENZYME"/>
    <property type="match status" value="1"/>
</dbReference>
<dbReference type="Pfam" id="PF00128">
    <property type="entry name" value="Alpha-amylase"/>
    <property type="match status" value="1"/>
</dbReference>
<dbReference type="Pfam" id="PF02922">
    <property type="entry name" value="CBM_48"/>
    <property type="match status" value="1"/>
</dbReference>
<dbReference type="Pfam" id="PF18390">
    <property type="entry name" value="GlgX_C"/>
    <property type="match status" value="1"/>
</dbReference>
<dbReference type="SMART" id="SM00642">
    <property type="entry name" value="Aamy"/>
    <property type="match status" value="1"/>
</dbReference>
<dbReference type="SUPFAM" id="SSF51445">
    <property type="entry name" value="(Trans)glycosidases"/>
    <property type="match status" value="1"/>
</dbReference>
<dbReference type="SUPFAM" id="SSF81296">
    <property type="entry name" value="E set domains"/>
    <property type="match status" value="1"/>
</dbReference>
<dbReference type="SUPFAM" id="SSF51011">
    <property type="entry name" value="Glycosyl hydrolase domain"/>
    <property type="match status" value="1"/>
</dbReference>
<accession>B7LSE2</accession>
<sequence length="658" mass="73975">MTQLTTGKATPHGATYDGHGVNFTLFSAHAERVELCVFDAQGNEVRFDLPGRSGDVWHGYLADARPGLRYGYRVHGPWQPAAGHRFNPAKLLIDPCARRVEGDLHDNPLFHAGYETPDSRDNATIAPKCVVVSDSYNWEDDAPPRTPWGNTVIYEAHVKGLTYQHPEIPAEIRGRYKALGHPVMINYFKRLGITALELMPVIHFASEPRLQRLGLTNYWGYNPMAMFALHPVYACSPESALDEFRDAVKELHKAGIEVILDIVINHSAELDLDGPMFSLRGIDNRSYYWIKEDGDYHNWTGCGNTLNLSNPGVMEYALECLRYWVETCHVDGFRFDLASVMGRTPAFRQDAPLFTAIQNCPVLSQVKLIAEPWDIGEGGYQVGNFPPLFAEWNDHFRDATRRFWLQRNLSLGDFAGRFAGSSDVFNRNGRLPGASINLVTAHDGFTLRDCVCFTNKHNEANGEENRDGSNNNHSNNHGKEGLGGSLDLIERRRDSVHALLTTLLLSQGTPMLLAGDEHGHSQHGNNNAYCQDNALTWLDWERANNGLTDFTAALIHLRQQIPALTRNQWWQENDGNVRWLNKDGQVLSVEEWQHGMTCMQIMLSDRWLIALNATPHLVDIVLPEGEWRAIPPFAGEDNPVVLEVWHGSAHGLCVFQKS</sequence>
<reference key="1">
    <citation type="journal article" date="2009" name="PLoS Genet.">
        <title>Organised genome dynamics in the Escherichia coli species results in highly diverse adaptive paths.</title>
        <authorList>
            <person name="Touchon M."/>
            <person name="Hoede C."/>
            <person name="Tenaillon O."/>
            <person name="Barbe V."/>
            <person name="Baeriswyl S."/>
            <person name="Bidet P."/>
            <person name="Bingen E."/>
            <person name="Bonacorsi S."/>
            <person name="Bouchier C."/>
            <person name="Bouvet O."/>
            <person name="Calteau A."/>
            <person name="Chiapello H."/>
            <person name="Clermont O."/>
            <person name="Cruveiller S."/>
            <person name="Danchin A."/>
            <person name="Diard M."/>
            <person name="Dossat C."/>
            <person name="Karoui M.E."/>
            <person name="Frapy E."/>
            <person name="Garry L."/>
            <person name="Ghigo J.M."/>
            <person name="Gilles A.M."/>
            <person name="Johnson J."/>
            <person name="Le Bouguenec C."/>
            <person name="Lescat M."/>
            <person name="Mangenot S."/>
            <person name="Martinez-Jehanne V."/>
            <person name="Matic I."/>
            <person name="Nassif X."/>
            <person name="Oztas S."/>
            <person name="Petit M.A."/>
            <person name="Pichon C."/>
            <person name="Rouy Z."/>
            <person name="Ruf C.S."/>
            <person name="Schneider D."/>
            <person name="Tourret J."/>
            <person name="Vacherie B."/>
            <person name="Vallenet D."/>
            <person name="Medigue C."/>
            <person name="Rocha E.P.C."/>
            <person name="Denamur E."/>
        </authorList>
    </citation>
    <scope>NUCLEOTIDE SEQUENCE [LARGE SCALE GENOMIC DNA]</scope>
    <source>
        <strain>ATCC 35469 / DSM 13698 / BCRC 15582 / CCUG 18766 / IAM 14443 / JCM 21226 / LMG 7866 / NBRC 102419 / NCTC 12128 / CDC 0568-73</strain>
    </source>
</reference>
<protein>
    <recommendedName>
        <fullName evidence="1">Glycogen debranching enzyme</fullName>
        <ecNumber evidence="1">3.2.1.196</ecNumber>
    </recommendedName>
    <alternativeName>
        <fullName evidence="1">Limit dextrin alpha-1,6-maltotetraose-hydrolase</fullName>
    </alternativeName>
</protein>
<evidence type="ECO:0000255" key="1">
    <source>
        <dbReference type="HAMAP-Rule" id="MF_01248"/>
    </source>
</evidence>
<evidence type="ECO:0000256" key="2">
    <source>
        <dbReference type="SAM" id="MobiDB-lite"/>
    </source>
</evidence>
<proteinExistence type="inferred from homology"/>
<gene>
    <name evidence="1" type="primary">glgX</name>
    <name type="ordered locus">EFER_3408</name>
</gene>
<feature type="chain" id="PRO_1000139871" description="Glycogen debranching enzyme">
    <location>
        <begin position="1"/>
        <end position="658"/>
    </location>
</feature>
<feature type="region of interest" description="Disordered" evidence="2">
    <location>
        <begin position="460"/>
        <end position="484"/>
    </location>
</feature>
<feature type="active site" description="Nucleophile" evidence="1">
    <location>
        <position position="336"/>
    </location>
</feature>
<feature type="active site" description="Proton donor" evidence="1">
    <location>
        <position position="371"/>
    </location>
</feature>
<feature type="site" description="Transition state stabilizer" evidence="1">
    <location>
        <position position="443"/>
    </location>
</feature>
<keyword id="KW-0119">Carbohydrate metabolism</keyword>
<keyword id="KW-0321">Glycogen metabolism</keyword>
<keyword id="KW-0326">Glycosidase</keyword>
<keyword id="KW-0378">Hydrolase</keyword>
<organism>
    <name type="scientific">Escherichia fergusonii (strain ATCC 35469 / DSM 13698 / CCUG 18766 / IAM 14443 / JCM 21226 / LMG 7866 / NBRC 102419 / NCTC 12128 / CDC 0568-73)</name>
    <dbReference type="NCBI Taxonomy" id="585054"/>
    <lineage>
        <taxon>Bacteria</taxon>
        <taxon>Pseudomonadati</taxon>
        <taxon>Pseudomonadota</taxon>
        <taxon>Gammaproteobacteria</taxon>
        <taxon>Enterobacterales</taxon>
        <taxon>Enterobacteriaceae</taxon>
        <taxon>Escherichia</taxon>
    </lineage>
</organism>
<comment type="function">
    <text evidence="1">Removes maltotriose and maltotetraose chains that are attached by 1,6-alpha-linkage to the limit dextrin main chain, generating a debranched limit dextrin.</text>
</comment>
<comment type="catalytic activity">
    <reaction evidence="1">
        <text>Hydrolysis of (1-&gt;6)-alpha-D-glucosidic linkages to branches with degrees of polymerization of three or four glucose residues in limit dextrin.</text>
        <dbReference type="EC" id="3.2.1.196"/>
    </reaction>
</comment>
<comment type="pathway">
    <text evidence="1">Glycan degradation; glycogen degradation.</text>
</comment>
<comment type="similarity">
    <text evidence="1">Belongs to the glycosyl hydrolase 13 family.</text>
</comment>
<name>GLGX_ESCF3</name>